<feature type="chain" id="PRO_0000052700" description="Hemoglobin subunit alpha-1">
    <location>
        <begin position="1"/>
        <end position="141"/>
    </location>
</feature>
<feature type="domain" description="Globin" evidence="1">
    <location>
        <begin position="1"/>
        <end position="141"/>
    </location>
</feature>
<feature type="binding site" evidence="1">
    <location>
        <position position="58"/>
    </location>
    <ligand>
        <name>O2</name>
        <dbReference type="ChEBI" id="CHEBI:15379"/>
    </ligand>
</feature>
<feature type="binding site" description="proximal binding residue" evidence="1">
    <location>
        <position position="87"/>
    </location>
    <ligand>
        <name>heme b</name>
        <dbReference type="ChEBI" id="CHEBI:60344"/>
    </ligand>
    <ligandPart>
        <name>Fe</name>
        <dbReference type="ChEBI" id="CHEBI:18248"/>
    </ligandPart>
</feature>
<dbReference type="SMR" id="Q9PRL9"/>
<dbReference type="Proteomes" id="UP000694559">
    <property type="component" value="Unplaced"/>
</dbReference>
<dbReference type="GO" id="GO:0072562">
    <property type="term" value="C:blood microparticle"/>
    <property type="evidence" value="ECO:0007669"/>
    <property type="project" value="TreeGrafter"/>
</dbReference>
<dbReference type="GO" id="GO:0031838">
    <property type="term" value="C:haptoglobin-hemoglobin complex"/>
    <property type="evidence" value="ECO:0007669"/>
    <property type="project" value="TreeGrafter"/>
</dbReference>
<dbReference type="GO" id="GO:0005833">
    <property type="term" value="C:hemoglobin complex"/>
    <property type="evidence" value="ECO:0007669"/>
    <property type="project" value="InterPro"/>
</dbReference>
<dbReference type="GO" id="GO:0031720">
    <property type="term" value="F:haptoglobin binding"/>
    <property type="evidence" value="ECO:0007669"/>
    <property type="project" value="TreeGrafter"/>
</dbReference>
<dbReference type="GO" id="GO:0020037">
    <property type="term" value="F:heme binding"/>
    <property type="evidence" value="ECO:0007669"/>
    <property type="project" value="InterPro"/>
</dbReference>
<dbReference type="GO" id="GO:0005506">
    <property type="term" value="F:iron ion binding"/>
    <property type="evidence" value="ECO:0007669"/>
    <property type="project" value="InterPro"/>
</dbReference>
<dbReference type="GO" id="GO:0043177">
    <property type="term" value="F:organic acid binding"/>
    <property type="evidence" value="ECO:0007669"/>
    <property type="project" value="TreeGrafter"/>
</dbReference>
<dbReference type="GO" id="GO:0019825">
    <property type="term" value="F:oxygen binding"/>
    <property type="evidence" value="ECO:0007669"/>
    <property type="project" value="InterPro"/>
</dbReference>
<dbReference type="GO" id="GO:0005344">
    <property type="term" value="F:oxygen carrier activity"/>
    <property type="evidence" value="ECO:0007669"/>
    <property type="project" value="UniProtKB-KW"/>
</dbReference>
<dbReference type="GO" id="GO:0004601">
    <property type="term" value="F:peroxidase activity"/>
    <property type="evidence" value="ECO:0007669"/>
    <property type="project" value="TreeGrafter"/>
</dbReference>
<dbReference type="GO" id="GO:0042744">
    <property type="term" value="P:hydrogen peroxide catabolic process"/>
    <property type="evidence" value="ECO:0007669"/>
    <property type="project" value="TreeGrafter"/>
</dbReference>
<dbReference type="CDD" id="cd08927">
    <property type="entry name" value="Hb-alpha-like"/>
    <property type="match status" value="1"/>
</dbReference>
<dbReference type="FunFam" id="1.10.490.10:FF:000002">
    <property type="entry name" value="Hemoglobin subunit alpha"/>
    <property type="match status" value="1"/>
</dbReference>
<dbReference type="Gene3D" id="1.10.490.10">
    <property type="entry name" value="Globins"/>
    <property type="match status" value="1"/>
</dbReference>
<dbReference type="InterPro" id="IPR000971">
    <property type="entry name" value="Globin"/>
</dbReference>
<dbReference type="InterPro" id="IPR009050">
    <property type="entry name" value="Globin-like_sf"/>
</dbReference>
<dbReference type="InterPro" id="IPR012292">
    <property type="entry name" value="Globin/Proto"/>
</dbReference>
<dbReference type="InterPro" id="IPR002338">
    <property type="entry name" value="Hemoglobin_a-typ"/>
</dbReference>
<dbReference type="InterPro" id="IPR050056">
    <property type="entry name" value="Hemoglobin_oxygen_transport"/>
</dbReference>
<dbReference type="InterPro" id="IPR002339">
    <property type="entry name" value="Hemoglobin_pi"/>
</dbReference>
<dbReference type="PANTHER" id="PTHR11442">
    <property type="entry name" value="HEMOGLOBIN FAMILY MEMBER"/>
    <property type="match status" value="1"/>
</dbReference>
<dbReference type="PANTHER" id="PTHR11442:SF48">
    <property type="entry name" value="HEMOGLOBIN SUBUNIT ALPHA"/>
    <property type="match status" value="1"/>
</dbReference>
<dbReference type="Pfam" id="PF00042">
    <property type="entry name" value="Globin"/>
    <property type="match status" value="1"/>
</dbReference>
<dbReference type="PRINTS" id="PR00612">
    <property type="entry name" value="ALPHAHAEM"/>
</dbReference>
<dbReference type="PRINTS" id="PR00815">
    <property type="entry name" value="PIHAEM"/>
</dbReference>
<dbReference type="SUPFAM" id="SSF46458">
    <property type="entry name" value="Globin-like"/>
    <property type="match status" value="1"/>
</dbReference>
<dbReference type="PROSITE" id="PS01033">
    <property type="entry name" value="GLOBIN"/>
    <property type="match status" value="1"/>
</dbReference>
<accession>Q9PRL9</accession>
<reference key="1">
    <citation type="journal article" date="1994" name="J. Protein Chem.">
        <title>Primary structure of hemoglobin from cobra Naja naja naja.</title>
        <authorList>
            <person name="Naqvi S."/>
            <person name="Abbasi A."/>
            <person name="Zaidi Z.H."/>
        </authorList>
    </citation>
    <scope>PROTEIN SEQUENCE</scope>
    <source>
        <tissue>Blood</tissue>
    </source>
</reference>
<name>HBA1_NAJNA</name>
<protein>
    <recommendedName>
        <fullName>Hemoglobin subunit alpha-1</fullName>
    </recommendedName>
    <alternativeName>
        <fullName>Alpha-1-globin</fullName>
    </alternativeName>
    <alternativeName>
        <fullName>Hemoglobin alpha-1 chain</fullName>
    </alternativeName>
    <alternativeName>
        <fullName>Hemoglobin alpha-I chain</fullName>
    </alternativeName>
</protein>
<organism>
    <name type="scientific">Naja naja</name>
    <name type="common">Indian cobra</name>
    <dbReference type="NCBI Taxonomy" id="35670"/>
    <lineage>
        <taxon>Eukaryota</taxon>
        <taxon>Metazoa</taxon>
        <taxon>Chordata</taxon>
        <taxon>Craniata</taxon>
        <taxon>Vertebrata</taxon>
        <taxon>Euteleostomi</taxon>
        <taxon>Lepidosauria</taxon>
        <taxon>Squamata</taxon>
        <taxon>Bifurcata</taxon>
        <taxon>Unidentata</taxon>
        <taxon>Episquamata</taxon>
        <taxon>Toxicofera</taxon>
        <taxon>Serpentes</taxon>
        <taxon>Colubroidea</taxon>
        <taxon>Elapidae</taxon>
        <taxon>Elapinae</taxon>
        <taxon>Naja</taxon>
    </lineage>
</organism>
<comment type="function">
    <text>Involved in oxygen transport from the lung to the various peripheral tissues.</text>
</comment>
<comment type="subunit">
    <text>Heterotetramer of two alpha chains and two beta chains.</text>
</comment>
<comment type="tissue specificity">
    <text>Red blood cells.</text>
</comment>
<comment type="similarity">
    <text evidence="1">Belongs to the globin family.</text>
</comment>
<keyword id="KW-0903">Direct protein sequencing</keyword>
<keyword id="KW-0349">Heme</keyword>
<keyword id="KW-0408">Iron</keyword>
<keyword id="KW-0479">Metal-binding</keyword>
<keyword id="KW-0561">Oxygen transport</keyword>
<keyword id="KW-1185">Reference proteome</keyword>
<keyword id="KW-0813">Transport</keyword>
<evidence type="ECO:0000255" key="1">
    <source>
        <dbReference type="PROSITE-ProRule" id="PRU00238"/>
    </source>
</evidence>
<proteinExistence type="evidence at protein level"/>
<sequence length="141" mass="15448">VLTDEDKARVRASWVPVGKNAELYGSETLTRMFAAHPTTKTYFPHFDLSPGSNNLRAHGKKVIDAITEAVNNLDDVAGTLSKLSDLHAQKLRVDPVNFKLLAHCLLVTIAAHNGGVLKPEVIVSLDKFLGDLSKDLVSKYR</sequence>